<name>UL95_HCMVT</name>
<proteinExistence type="inferred from homology"/>
<feature type="chain" id="PRO_0000417850" description="Protein UL95">
    <location>
        <begin position="1"/>
        <end position="527"/>
    </location>
</feature>
<feature type="region of interest" description="Disordered" evidence="1">
    <location>
        <begin position="1"/>
        <end position="36"/>
    </location>
</feature>
<feature type="region of interest" description="Disordered" evidence="1">
    <location>
        <begin position="167"/>
        <end position="216"/>
    </location>
</feature>
<feature type="compositionally biased region" description="Basic and acidic residues" evidence="1">
    <location>
        <begin position="9"/>
        <end position="33"/>
    </location>
</feature>
<feature type="compositionally biased region" description="Basic residues" evidence="1">
    <location>
        <begin position="202"/>
        <end position="211"/>
    </location>
</feature>
<comment type="function">
    <text evidence="2">Participates in the expression of late viral mRNAs. Expressed before viral DNA replication, UL95 assembles at the viral pre-replication complexes (pre-RCs) containing the early viral protein UL44.</text>
</comment>
<comment type="subcellular location">
    <subcellularLocation>
        <location evidence="2">Host nucleus</location>
    </subcellularLocation>
    <text>Recruited to nuclear replication compartments.</text>
</comment>
<comment type="similarity">
    <text evidence="3">Belongs to the herpesviridae UL95 family.</text>
</comment>
<organismHost>
    <name type="scientific">Homo sapiens</name>
    <name type="common">Human</name>
    <dbReference type="NCBI Taxonomy" id="9606"/>
</organismHost>
<keyword id="KW-0244">Early protein</keyword>
<keyword id="KW-1048">Host nucleus</keyword>
<reference key="1">
    <citation type="journal article" date="2004" name="J. Gen. Virol.">
        <title>Genetic content of wild-type human cytomegalovirus.</title>
        <authorList>
            <person name="Dolan A."/>
            <person name="Cunningham C."/>
            <person name="Hector R.D."/>
            <person name="Hassan-Walker A.F."/>
            <person name="Lee L."/>
            <person name="Addison C."/>
            <person name="Dargan D.J."/>
            <person name="McGeoch D.J."/>
            <person name="Gatherer D."/>
            <person name="Emery V.C."/>
            <person name="Griffiths P.D."/>
            <person name="Sinzger C."/>
            <person name="McSharry B.P."/>
            <person name="Wilkinson G.W.G."/>
            <person name="Davison A.J."/>
        </authorList>
    </citation>
    <scope>NUCLEOTIDE SEQUENCE [LARGE SCALE GENOMIC DNA]</scope>
</reference>
<reference key="2">
    <citation type="journal article" date="2009" name="J. Gen. Virol.">
        <title>High-throughput sequence analysis of variants of human cytomegalovirus strains Towne and AD169.</title>
        <authorList>
            <person name="Bradley A.J."/>
            <person name="Lurain N.S."/>
            <person name="Ghazal P."/>
            <person name="Trivedi U."/>
            <person name="Cunningham C."/>
            <person name="Baluchova K."/>
            <person name="Gatherer D."/>
            <person name="Wilkinson G.W."/>
            <person name="Dargan D.J."/>
            <person name="Davison A.J."/>
        </authorList>
    </citation>
    <scope>NUCLEOTIDE SEQUENCE [LARGE SCALE GENOMIC DNA]</scope>
</reference>
<reference key="3">
    <citation type="journal article" date="2011" name="J. Virol.">
        <title>The human cytomegalovirus gene products essential for late viral gene expression assemble into prereplication complexes before viral DNA replication.</title>
        <authorList>
            <person name="Isomura H."/>
            <person name="Stinski M.F."/>
            <person name="Murata T."/>
            <person name="Yamashita Y."/>
            <person name="Kanda T."/>
            <person name="Toyokuni S."/>
            <person name="Tsurumi T."/>
        </authorList>
    </citation>
    <scope>FUNCTION</scope>
    <scope>SUBCELLULAR LOCATION</scope>
</reference>
<organism>
    <name type="scientific">Human cytomegalovirus (strain Towne)</name>
    <name type="common">HHV-5</name>
    <name type="synonym">Human herpesvirus 5</name>
    <dbReference type="NCBI Taxonomy" id="10363"/>
    <lineage>
        <taxon>Viruses</taxon>
        <taxon>Duplodnaviria</taxon>
        <taxon>Heunggongvirae</taxon>
        <taxon>Peploviricota</taxon>
        <taxon>Herviviricetes</taxon>
        <taxon>Herpesvirales</taxon>
        <taxon>Orthoherpesviridae</taxon>
        <taxon>Betaherpesvirinae</taxon>
        <taxon>Cytomegalovirus</taxon>
        <taxon>Cytomegalovirus humanbeta5</taxon>
        <taxon>Human cytomegalovirus</taxon>
    </lineage>
</organism>
<accession>B9VXQ2</accession>
<sequence>MMAAAVVRAEVRRQRREERKKMAAARTTEDPPENHVVADVACGTGAVTRSSSSSLVVSSSSASGSDEPSSASPLSFPVCSPSTAVRSPGSAGVSTSLCSVERMVELSAQSPAADFSVSEAWRFEEAVNMALVACEAVSPYDRFRLIETPDENFLLVTNVIPRESAEVPVLDSSSSGGDSGPEDKKKNVGNKTAGEKNGGGSRAKRRRRRRAPKNDAATPSFLRRHDVLERFAAAAEPLPSLCVRDYALRNADRVTYDGELIYGSYLLYRKAHVELSLSSNKVQHVEAVLRQVYTPGLLDHHNVCDVEALLWLLYCGPRSFCARDTCFGREKNGCPFPALLPKLFYEPVRDYMTYMNLAELYVFVWYRGYEFPAPTPQATTAGSGGGGGAGACAVETSASAGRVDDAGDEVHLPLKPVSLDRLREVLQAVRGRFSGREVPAWPASSRTCLLCALYSQNRLCLDLARDEARTVSYSPIVIQDCAAAVTDVTLSHILPGQSTVSLFPVYHVGKLLDALSLNDAGLITLNL</sequence>
<protein>
    <recommendedName>
        <fullName>Protein UL95</fullName>
    </recommendedName>
</protein>
<dbReference type="EMBL" id="FJ616285">
    <property type="protein sequence ID" value="ACM48072.1"/>
    <property type="molecule type" value="Genomic_DNA"/>
</dbReference>
<dbReference type="Proteomes" id="UP000006907">
    <property type="component" value="Segment"/>
</dbReference>
<dbReference type="GO" id="GO:0042025">
    <property type="term" value="C:host cell nucleus"/>
    <property type="evidence" value="ECO:0007669"/>
    <property type="project" value="UniProtKB-SubCell"/>
</dbReference>
<dbReference type="InterPro" id="IPR004280">
    <property type="entry name" value="Herpes_UL95"/>
</dbReference>
<dbReference type="Pfam" id="PF03038">
    <property type="entry name" value="Herpes_UL95"/>
    <property type="match status" value="1"/>
</dbReference>
<gene>
    <name type="primary">UL95</name>
</gene>
<evidence type="ECO:0000256" key="1">
    <source>
        <dbReference type="SAM" id="MobiDB-lite"/>
    </source>
</evidence>
<evidence type="ECO:0000269" key="2">
    <source>
    </source>
</evidence>
<evidence type="ECO:0000305" key="3"/>